<sequence length="314" mass="34079">MAPALPFALPSLAGKVYLVTGGNTGVGFHTVDELAKHGARVYMGARSPGKAEAAIKTIRAETPTADVHFLQMDLMDLHSVVAAAKSFKEKETKLHGLVNNAGIMATPYALSGDGFEAQWQTNYLSHWVLTWHLLDVLVRTLQAEGGAAGSVRVVDVTSDGHNFAPKVGIDFKDINLEKAGVFARYGQSKVGNILHAKQLNKLYGPSGSETAKKGIWTAAVHPGHLDTNLNKQTAFPKFVNTLLRAVGAYSPPRDGAFNSVFAVASPEFKVADSGEYFVPGQKKKQPSKVARDMELAGRLWKWTEEELRKRELLD</sequence>
<name>DRTF_ASPCI</name>
<accession>A0A0U5CNP2</accession>
<organism>
    <name type="scientific">Aspergillus calidoustus</name>
    <dbReference type="NCBI Taxonomy" id="454130"/>
    <lineage>
        <taxon>Eukaryota</taxon>
        <taxon>Fungi</taxon>
        <taxon>Dikarya</taxon>
        <taxon>Ascomycota</taxon>
        <taxon>Pezizomycotina</taxon>
        <taxon>Eurotiomycetes</taxon>
        <taxon>Eurotiomycetidae</taxon>
        <taxon>Eurotiales</taxon>
        <taxon>Aspergillaceae</taxon>
        <taxon>Aspergillus</taxon>
        <taxon>Aspergillus subgen. Nidulantes</taxon>
    </lineage>
</organism>
<feature type="chain" id="PRO_0000454535" description="Short-chain dehydrogenase/reductase drtF">
    <location>
        <begin position="1"/>
        <end position="314"/>
    </location>
</feature>
<feature type="active site" description="Proton acceptor" evidence="3">
    <location>
        <position position="185"/>
    </location>
</feature>
<feature type="active site" description="Lowers pKa of active site Tyr" evidence="2">
    <location>
        <position position="189"/>
    </location>
</feature>
<feature type="binding site" evidence="1">
    <location>
        <position position="26"/>
    </location>
    <ligand>
        <name>NADP(+)</name>
        <dbReference type="ChEBI" id="CHEBI:58349"/>
    </ligand>
</feature>
<feature type="binding site" evidence="1">
    <location>
        <position position="50"/>
    </location>
    <ligand>
        <name>NADP(+)</name>
        <dbReference type="ChEBI" id="CHEBI:58349"/>
    </ligand>
</feature>
<feature type="binding site" evidence="1">
    <location>
        <position position="73"/>
    </location>
    <ligand>
        <name>NADP(+)</name>
        <dbReference type="ChEBI" id="CHEBI:58349"/>
    </ligand>
</feature>
<feature type="binding site" evidence="2">
    <location>
        <position position="100"/>
    </location>
    <ligand>
        <name>NADP(+)</name>
        <dbReference type="ChEBI" id="CHEBI:58349"/>
    </ligand>
</feature>
<feature type="binding site" evidence="2">
    <location>
        <position position="185"/>
    </location>
    <ligand>
        <name>NADP(+)</name>
        <dbReference type="ChEBI" id="CHEBI:58349"/>
    </ligand>
</feature>
<feature type="binding site" evidence="2">
    <location>
        <position position="189"/>
    </location>
    <ligand>
        <name>NADP(+)</name>
        <dbReference type="ChEBI" id="CHEBI:58349"/>
    </ligand>
</feature>
<evidence type="ECO:0000250" key="1">
    <source>
        <dbReference type="UniProtKB" id="L0E2Z4"/>
    </source>
</evidence>
<evidence type="ECO:0000250" key="2">
    <source>
        <dbReference type="UniProtKB" id="O93868"/>
    </source>
</evidence>
<evidence type="ECO:0000255" key="3">
    <source>
        <dbReference type="PROSITE-ProRule" id="PRU10001"/>
    </source>
</evidence>
<evidence type="ECO:0000269" key="4">
    <source>
    </source>
</evidence>
<evidence type="ECO:0000303" key="5">
    <source>
    </source>
</evidence>
<evidence type="ECO:0000305" key="6"/>
<gene>
    <name evidence="5" type="primary">drtF</name>
    <name type="ORF">ASPCAL02982</name>
</gene>
<comment type="function">
    <text evidence="4">Short-chain dehydrogenase/reductase; part of the gene cluster that mediates the biosynthesis of various drimane-type sesquiterpene esters, compounds that exhibit diverse biological activities and are widely present in eukaryotes (PubMed:34468074). The pathway begins with the synthesis of the backbone drimenol by the terpene cyclase drtB using farnesyl pyrophosphate (FPP) as substrate (PubMed:34468074). The cytochrome P450 monooxygenase drtD is then responsible for the hydroxylations at C-6, C-9 and C-12, as well as the oxidation of hydroxyl groups at C-6 and C-11 to a ketone and an aldehyde, respectively (PubMed:34468074). Then, the biosynthesis can go in two directions, either the hydroxylated drimenol is further hydroxylated at C-2 and C-3 by an enzyme(s) not associated with the drt cluster, or the FAD-binding oxidoreductase drtC further oxidizes C-11 or C-12 to form the butyrolactone ring (PubMed:34468074). DrtB, drtD and drtC are solely responsible for the formation of the different drimane structures observed during drimane sesquiterpenes biosynthesis (PubMed:34468074). The polyketide synthase drtA synthesizes different lengths (C6 and C8) of PKS chains, which are then oxidized to varying degrees by the short-chain dehydrogenase drtF (PubMed:34468074). Finally, these PKS chains are transferred onto drimane sesquiterpenes by the acyltransferase drtE, forming the sesquiterpene esters (PubMed:34468074). In addition to the different fatty acyl-CoA chains produced by drtA, drtE is also able to use cinnamoyl-CoA as a substrate (PubMed:34468074).</text>
</comment>
<comment type="pathway">
    <text evidence="4">Secondary metabolite biosynthesis; terpenoid biosynthesis.</text>
</comment>
<comment type="disruption phenotype">
    <text evidence="4">Abolishes the production of asperiene C, asperiene A, calidoustene A, (6-Strobilactone-B) ester of (E,E)-6-carbonyl-7-hydroxy-2,4-octadienoic acid, ustusolate C, ustusolide E and calidoustene B (PubMed:34468074). Still produces ustusoic acid A, ustusolate A, (2'E,4'E)-6-(1'-carboxyhexa-2',4',-diene)-9-hydroxy-drim-7-ene-11,12-olide, calidoustene C and RES-1149-2, all compounds with fully unsaturated acyl chains (PubMed:34468074).</text>
</comment>
<comment type="miscellaneous">
    <text evidence="4">The various drimane-type sesquiterpene esters produced by the A.calidoustus drt cluster include asperiene C, asperiene A, (6-Strobilactone-B) ester of (E,E)-6-carbonyl-7-hydroxy-2,4-octadienoic acid, ustusolate A, ustusolate C, ustusolide E, ustusoic acid A, (2'E,4'E)-6-(1'-carboxyhexa-2',4',-diene)-9-hydroxy-drim-7-ene-11,12-olide, RES-1149-2, as well as the 3 newly identified compounds calidoustene A, calidoustene B and calidoustene C.</text>
</comment>
<comment type="similarity">
    <text evidence="6">Belongs to the short-chain dehydrogenases/reductases (SDR) family.</text>
</comment>
<reference key="1">
    <citation type="journal article" date="2016" name="Genome Announc.">
        <title>Draft genome sequences of fungus Aspergillus calidoustus.</title>
        <authorList>
            <person name="Horn F."/>
            <person name="Linde J."/>
            <person name="Mattern D.J."/>
            <person name="Walther G."/>
            <person name="Guthke R."/>
            <person name="Scherlach K."/>
            <person name="Martin K."/>
            <person name="Brakhage A.A."/>
            <person name="Petzke L."/>
            <person name="Valiante V."/>
        </authorList>
    </citation>
    <scope>NUCLEOTIDE SEQUENCE [LARGE SCALE GENOMIC DNA]</scope>
    <source>
        <strain>SF006504</strain>
    </source>
</reference>
<reference key="2">
    <citation type="journal article" date="2021" name="Angew. Chem. Int. Ed.">
        <title>Biosynthesis of fungal drimane-type sesquiterpene esters.</title>
        <authorList>
            <person name="Huang Y."/>
            <person name="Hoefgen S."/>
            <person name="Valiante V."/>
        </authorList>
    </citation>
    <scope>FUNCTION</scope>
    <scope>DISRUPTION PHENOTYPE</scope>
    <scope>CATALYTIC ACTIVITY</scope>
    <scope>PATHWAY</scope>
</reference>
<proteinExistence type="evidence at protein level"/>
<keyword id="KW-0521">NADP</keyword>
<keyword id="KW-0560">Oxidoreductase</keyword>
<keyword id="KW-1185">Reference proteome</keyword>
<protein>
    <recommendedName>
        <fullName evidence="5">Short-chain dehydrogenase/reductase drtF</fullName>
        <ecNumber evidence="4">1.1.1.-</ecNumber>
    </recommendedName>
    <alternativeName>
        <fullName evidence="5">Drimane-type sesquiterpene ester biosynthesis cluster protein F</fullName>
    </alternativeName>
</protein>
<dbReference type="EC" id="1.1.1.-" evidence="4"/>
<dbReference type="EMBL" id="CDMC01000002">
    <property type="protein sequence ID" value="CEN60546.1"/>
    <property type="molecule type" value="Genomic_DNA"/>
</dbReference>
<dbReference type="SMR" id="A0A0U5CNP2"/>
<dbReference type="STRING" id="454130.A0A0U5CNP2"/>
<dbReference type="OMA" id="IMGVPYS"/>
<dbReference type="OrthoDB" id="191139at2759"/>
<dbReference type="UniPathway" id="UPA00213"/>
<dbReference type="Proteomes" id="UP000054771">
    <property type="component" value="Unassembled WGS sequence"/>
</dbReference>
<dbReference type="GO" id="GO:0016491">
    <property type="term" value="F:oxidoreductase activity"/>
    <property type="evidence" value="ECO:0007669"/>
    <property type="project" value="UniProtKB-KW"/>
</dbReference>
<dbReference type="GO" id="GO:0016114">
    <property type="term" value="P:terpenoid biosynthetic process"/>
    <property type="evidence" value="ECO:0007669"/>
    <property type="project" value="UniProtKB-UniPathway"/>
</dbReference>
<dbReference type="CDD" id="cd05327">
    <property type="entry name" value="retinol-DH_like_SDR_c_like"/>
    <property type="match status" value="1"/>
</dbReference>
<dbReference type="Gene3D" id="3.40.50.720">
    <property type="entry name" value="NAD(P)-binding Rossmann-like Domain"/>
    <property type="match status" value="1"/>
</dbReference>
<dbReference type="InterPro" id="IPR036291">
    <property type="entry name" value="NAD(P)-bd_dom_sf"/>
</dbReference>
<dbReference type="InterPro" id="IPR002347">
    <property type="entry name" value="SDR_fam"/>
</dbReference>
<dbReference type="PANTHER" id="PTHR43157:SF31">
    <property type="entry name" value="PHOSPHATIDYLINOSITOL-GLYCAN BIOSYNTHESIS CLASS F PROTEIN"/>
    <property type="match status" value="1"/>
</dbReference>
<dbReference type="PANTHER" id="PTHR43157">
    <property type="entry name" value="PHOSPHATIDYLINOSITOL-GLYCAN BIOSYNTHESIS CLASS F PROTEIN-RELATED"/>
    <property type="match status" value="1"/>
</dbReference>
<dbReference type="Pfam" id="PF00106">
    <property type="entry name" value="adh_short"/>
    <property type="match status" value="1"/>
</dbReference>
<dbReference type="PRINTS" id="PR00081">
    <property type="entry name" value="GDHRDH"/>
</dbReference>
<dbReference type="SUPFAM" id="SSF51735">
    <property type="entry name" value="NAD(P)-binding Rossmann-fold domains"/>
    <property type="match status" value="1"/>
</dbReference>